<evidence type="ECO:0000250" key="1"/>
<evidence type="ECO:0000305" key="2"/>
<protein>
    <recommendedName>
        <fullName>Dihydrolipoyl dehydrogenase</fullName>
        <ecNumber>1.8.1.4</ecNumber>
    </recommendedName>
    <alternativeName>
        <fullName>Dihydrolipoamide dehydrogenase</fullName>
    </alternativeName>
    <alternativeName>
        <fullName>E3 component of pyruvate and 2-oxoglutarate dehydrogenases complexes</fullName>
    </alternativeName>
    <alternativeName>
        <fullName>Glycine cleavage system L protein</fullName>
    </alternativeName>
</protein>
<proteinExistence type="inferred from homology"/>
<accession>P0A9P2</accession>
<accession>P00391</accession>
<feature type="initiator methionine" description="Removed" evidence="1">
    <location>
        <position position="1"/>
    </location>
</feature>
<feature type="chain" id="PRO_0000068028" description="Dihydrolipoyl dehydrogenase">
    <location>
        <begin position="2"/>
        <end position="474"/>
    </location>
</feature>
<feature type="active site" description="Proton acceptor" evidence="1">
    <location>
        <position position="445"/>
    </location>
</feature>
<feature type="binding site" evidence="1">
    <location>
        <begin position="36"/>
        <end position="45"/>
    </location>
    <ligand>
        <name>FAD</name>
        <dbReference type="ChEBI" id="CHEBI:57692"/>
    </ligand>
</feature>
<feature type="binding site" evidence="1">
    <location>
        <position position="54"/>
    </location>
    <ligand>
        <name>FAD</name>
        <dbReference type="ChEBI" id="CHEBI:57692"/>
    </ligand>
</feature>
<feature type="binding site" evidence="1">
    <location>
        <position position="117"/>
    </location>
    <ligand>
        <name>FAD</name>
        <dbReference type="ChEBI" id="CHEBI:57692"/>
    </ligand>
</feature>
<feature type="binding site" evidence="1">
    <location>
        <begin position="182"/>
        <end position="186"/>
    </location>
    <ligand>
        <name>NAD(+)</name>
        <dbReference type="ChEBI" id="CHEBI:57540"/>
    </ligand>
</feature>
<feature type="binding site" evidence="1">
    <location>
        <position position="205"/>
    </location>
    <ligand>
        <name>NAD(+)</name>
        <dbReference type="ChEBI" id="CHEBI:57540"/>
    </ligand>
</feature>
<feature type="binding site" evidence="1">
    <location>
        <position position="238"/>
    </location>
    <ligand>
        <name>NAD(+)</name>
        <dbReference type="ChEBI" id="CHEBI:57540"/>
    </ligand>
</feature>
<feature type="binding site" evidence="1">
    <location>
        <begin position="270"/>
        <end position="273"/>
    </location>
    <ligand>
        <name>NAD(+)</name>
        <dbReference type="ChEBI" id="CHEBI:57540"/>
    </ligand>
</feature>
<feature type="binding site" evidence="1">
    <location>
        <position position="313"/>
    </location>
    <ligand>
        <name>FAD</name>
        <dbReference type="ChEBI" id="CHEBI:57692"/>
    </ligand>
</feature>
<feature type="binding site" evidence="1">
    <location>
        <position position="321"/>
    </location>
    <ligand>
        <name>FAD</name>
        <dbReference type="ChEBI" id="CHEBI:57692"/>
    </ligand>
</feature>
<feature type="modified residue" description="N6-acetyllysine" evidence="1">
    <location>
        <position position="220"/>
    </location>
</feature>
<feature type="disulfide bond" description="Redox-active" evidence="1">
    <location>
        <begin position="45"/>
        <end position="50"/>
    </location>
</feature>
<keyword id="KW-0007">Acetylation</keyword>
<keyword id="KW-0963">Cytoplasm</keyword>
<keyword id="KW-1015">Disulfide bond</keyword>
<keyword id="KW-0274">FAD</keyword>
<keyword id="KW-0285">Flavoprotein</keyword>
<keyword id="KW-0520">NAD</keyword>
<keyword id="KW-0560">Oxidoreductase</keyword>
<keyword id="KW-0676">Redox-active center</keyword>
<keyword id="KW-1185">Reference proteome</keyword>
<sequence length="474" mass="50688">MSTEIKTQVVVLGAGPAGYSAAFRCADLGLETVIVERYNTLGGVCLNVGCIPSKALLHVAKVIEEAKALAEHGIVFGEPKTDIDKIRTWKEKVINQLTGGLAGMAKGRKVKVVNGLGKFTGANTLEVEGENGKTVINFDNAIIAAGSRPIQLPFIPHEDPRIWDSTDALELKEVPERLLVMGGGIIGLEMGTVYHALGSQIDVVEMFDQVIPAADKDIVKVFTKRISKKFNLMLETKVTAVEAKEDGIYVTMEGKKAPAEPQRYDAVLVAIGRVPNGKNLDAGKAGVEVDDRGFIRVDKQLRTNVPHIFAIGDIVGQPMLAHKGVHEGHVAAEVIAGKKHYFDPKVIPSIAYTEPEVAWVGLTEKEAKEKGISYETATFPWAASGRAIASDCADGMTKLIFDKESHRVIGGAIVGTNGGELLGEIGLAIEMGCDAEDIALTIHAHPTLHESVGLAAEVFEGSITDLPNPKAKKK</sequence>
<gene>
    <name type="primary">lpdA</name>
    <name type="ordered locus">Z0126</name>
    <name type="ordered locus">ECs0120</name>
</gene>
<comment type="function">
    <text evidence="1">Lipoamide dehydrogenase is a component of the glycine cleavage system as well as of the alpha-ketoacid dehydrogenase complexes.</text>
</comment>
<comment type="catalytic activity">
    <reaction>
        <text>N(6)-[(R)-dihydrolipoyl]-L-lysyl-[protein] + NAD(+) = N(6)-[(R)-lipoyl]-L-lysyl-[protein] + NADH + H(+)</text>
        <dbReference type="Rhea" id="RHEA:15045"/>
        <dbReference type="Rhea" id="RHEA-COMP:10474"/>
        <dbReference type="Rhea" id="RHEA-COMP:10475"/>
        <dbReference type="ChEBI" id="CHEBI:15378"/>
        <dbReference type="ChEBI" id="CHEBI:57540"/>
        <dbReference type="ChEBI" id="CHEBI:57945"/>
        <dbReference type="ChEBI" id="CHEBI:83099"/>
        <dbReference type="ChEBI" id="CHEBI:83100"/>
        <dbReference type="EC" id="1.8.1.4"/>
    </reaction>
</comment>
<comment type="cofactor">
    <cofactor evidence="1">
        <name>FAD</name>
        <dbReference type="ChEBI" id="CHEBI:57692"/>
    </cofactor>
    <text evidence="1">Binds 1 FAD per subunit.</text>
</comment>
<comment type="subunit">
    <text evidence="1">Homodimer.</text>
</comment>
<comment type="subcellular location">
    <subcellularLocation>
        <location evidence="1">Cytoplasm</location>
    </subcellularLocation>
</comment>
<comment type="miscellaneous">
    <text evidence="1">The active site is a redox-active disulfide bond.</text>
</comment>
<comment type="similarity">
    <text evidence="2">Belongs to the class-I pyridine nucleotide-disulfide oxidoreductase family.</text>
</comment>
<organism>
    <name type="scientific">Escherichia coli O157:H7</name>
    <dbReference type="NCBI Taxonomy" id="83334"/>
    <lineage>
        <taxon>Bacteria</taxon>
        <taxon>Pseudomonadati</taxon>
        <taxon>Pseudomonadota</taxon>
        <taxon>Gammaproteobacteria</taxon>
        <taxon>Enterobacterales</taxon>
        <taxon>Enterobacteriaceae</taxon>
        <taxon>Escherichia</taxon>
    </lineage>
</organism>
<reference key="1">
    <citation type="journal article" date="2001" name="Nature">
        <title>Genome sequence of enterohaemorrhagic Escherichia coli O157:H7.</title>
        <authorList>
            <person name="Perna N.T."/>
            <person name="Plunkett G. III"/>
            <person name="Burland V."/>
            <person name="Mau B."/>
            <person name="Glasner J.D."/>
            <person name="Rose D.J."/>
            <person name="Mayhew G.F."/>
            <person name="Evans P.S."/>
            <person name="Gregor J."/>
            <person name="Kirkpatrick H.A."/>
            <person name="Posfai G."/>
            <person name="Hackett J."/>
            <person name="Klink S."/>
            <person name="Boutin A."/>
            <person name="Shao Y."/>
            <person name="Miller L."/>
            <person name="Grotbeck E.J."/>
            <person name="Davis N.W."/>
            <person name="Lim A."/>
            <person name="Dimalanta E.T."/>
            <person name="Potamousis K."/>
            <person name="Apodaca J."/>
            <person name="Anantharaman T.S."/>
            <person name="Lin J."/>
            <person name="Yen G."/>
            <person name="Schwartz D.C."/>
            <person name="Welch R.A."/>
            <person name="Blattner F.R."/>
        </authorList>
    </citation>
    <scope>NUCLEOTIDE SEQUENCE [LARGE SCALE GENOMIC DNA]</scope>
    <source>
        <strain>O157:H7 / EDL933 / ATCC 700927 / EHEC</strain>
    </source>
</reference>
<reference key="2">
    <citation type="journal article" date="2001" name="DNA Res.">
        <title>Complete genome sequence of enterohemorrhagic Escherichia coli O157:H7 and genomic comparison with a laboratory strain K-12.</title>
        <authorList>
            <person name="Hayashi T."/>
            <person name="Makino K."/>
            <person name="Ohnishi M."/>
            <person name="Kurokawa K."/>
            <person name="Ishii K."/>
            <person name="Yokoyama K."/>
            <person name="Han C.-G."/>
            <person name="Ohtsubo E."/>
            <person name="Nakayama K."/>
            <person name="Murata T."/>
            <person name="Tanaka M."/>
            <person name="Tobe T."/>
            <person name="Iida T."/>
            <person name="Takami H."/>
            <person name="Honda T."/>
            <person name="Sasakawa C."/>
            <person name="Ogasawara N."/>
            <person name="Yasunaga T."/>
            <person name="Kuhara S."/>
            <person name="Shiba T."/>
            <person name="Hattori M."/>
            <person name="Shinagawa H."/>
        </authorList>
    </citation>
    <scope>NUCLEOTIDE SEQUENCE [LARGE SCALE GENOMIC DNA]</scope>
    <source>
        <strain>O157:H7 / Sakai / RIMD 0509952 / EHEC</strain>
    </source>
</reference>
<dbReference type="EC" id="1.8.1.4"/>
<dbReference type="EMBL" id="AE005174">
    <property type="protein sequence ID" value="AAG54420.1"/>
    <property type="molecule type" value="Genomic_DNA"/>
</dbReference>
<dbReference type="EMBL" id="BA000007">
    <property type="protein sequence ID" value="BAB33543.1"/>
    <property type="molecule type" value="Genomic_DNA"/>
</dbReference>
<dbReference type="PIR" id="H85494">
    <property type="entry name" value="H85494"/>
</dbReference>
<dbReference type="PIR" id="H90643">
    <property type="entry name" value="H90643"/>
</dbReference>
<dbReference type="RefSeq" id="WP_000102485.1">
    <property type="nucleotide sequence ID" value="NZ_VOAI01000002.1"/>
</dbReference>
<dbReference type="SMR" id="P0A9P2"/>
<dbReference type="STRING" id="155864.Z0126"/>
<dbReference type="GeneID" id="93777320"/>
<dbReference type="KEGG" id="ece:Z0126"/>
<dbReference type="KEGG" id="ecs:ECs_0120"/>
<dbReference type="PATRIC" id="fig|386585.9.peg.218"/>
<dbReference type="eggNOG" id="COG1249">
    <property type="taxonomic scope" value="Bacteria"/>
</dbReference>
<dbReference type="HOGENOM" id="CLU_016755_0_3_6"/>
<dbReference type="OMA" id="HMVGDRM"/>
<dbReference type="Proteomes" id="UP000000558">
    <property type="component" value="Chromosome"/>
</dbReference>
<dbReference type="Proteomes" id="UP000002519">
    <property type="component" value="Chromosome"/>
</dbReference>
<dbReference type="GO" id="GO:0005737">
    <property type="term" value="C:cytoplasm"/>
    <property type="evidence" value="ECO:0007669"/>
    <property type="project" value="UniProtKB-SubCell"/>
</dbReference>
<dbReference type="GO" id="GO:0004148">
    <property type="term" value="F:dihydrolipoyl dehydrogenase (NADH) activity"/>
    <property type="evidence" value="ECO:0007669"/>
    <property type="project" value="UniProtKB-EC"/>
</dbReference>
<dbReference type="GO" id="GO:0050660">
    <property type="term" value="F:flavin adenine dinucleotide binding"/>
    <property type="evidence" value="ECO:0007669"/>
    <property type="project" value="InterPro"/>
</dbReference>
<dbReference type="GO" id="GO:0006103">
    <property type="term" value="P:2-oxoglutarate metabolic process"/>
    <property type="evidence" value="ECO:0007669"/>
    <property type="project" value="TreeGrafter"/>
</dbReference>
<dbReference type="FunFam" id="3.30.390.30:FF:000001">
    <property type="entry name" value="Dihydrolipoyl dehydrogenase"/>
    <property type="match status" value="1"/>
</dbReference>
<dbReference type="FunFam" id="3.50.50.60:FF:000014">
    <property type="entry name" value="Dihydrolipoyl dehydrogenase"/>
    <property type="match status" value="1"/>
</dbReference>
<dbReference type="FunFam" id="3.50.50.60:FF:000001">
    <property type="entry name" value="Dihydrolipoyl dehydrogenase, mitochondrial"/>
    <property type="match status" value="1"/>
</dbReference>
<dbReference type="Gene3D" id="3.30.390.30">
    <property type="match status" value="1"/>
</dbReference>
<dbReference type="Gene3D" id="3.50.50.60">
    <property type="entry name" value="FAD/NAD(P)-binding domain"/>
    <property type="match status" value="2"/>
</dbReference>
<dbReference type="InterPro" id="IPR050151">
    <property type="entry name" value="Class-I_Pyr_Nuc-Dis_Oxidored"/>
</dbReference>
<dbReference type="InterPro" id="IPR036188">
    <property type="entry name" value="FAD/NAD-bd_sf"/>
</dbReference>
<dbReference type="InterPro" id="IPR023753">
    <property type="entry name" value="FAD/NAD-binding_dom"/>
</dbReference>
<dbReference type="InterPro" id="IPR016156">
    <property type="entry name" value="FAD/NAD-linked_Rdtase_dimer_sf"/>
</dbReference>
<dbReference type="InterPro" id="IPR006258">
    <property type="entry name" value="Lipoamide_DH"/>
</dbReference>
<dbReference type="InterPro" id="IPR001100">
    <property type="entry name" value="Pyr_nuc-diS_OxRdtase"/>
</dbReference>
<dbReference type="InterPro" id="IPR004099">
    <property type="entry name" value="Pyr_nucl-diS_OxRdtase_dimer"/>
</dbReference>
<dbReference type="InterPro" id="IPR012999">
    <property type="entry name" value="Pyr_OxRdtase_I_AS"/>
</dbReference>
<dbReference type="NCBIfam" id="TIGR01350">
    <property type="entry name" value="lipoamide_DH"/>
    <property type="match status" value="1"/>
</dbReference>
<dbReference type="PANTHER" id="PTHR22912:SF160">
    <property type="entry name" value="DIHYDROLIPOYL DEHYDROGENASE"/>
    <property type="match status" value="1"/>
</dbReference>
<dbReference type="PANTHER" id="PTHR22912">
    <property type="entry name" value="DISULFIDE OXIDOREDUCTASE"/>
    <property type="match status" value="1"/>
</dbReference>
<dbReference type="Pfam" id="PF07992">
    <property type="entry name" value="Pyr_redox_2"/>
    <property type="match status" value="1"/>
</dbReference>
<dbReference type="Pfam" id="PF02852">
    <property type="entry name" value="Pyr_redox_dim"/>
    <property type="match status" value="1"/>
</dbReference>
<dbReference type="PIRSF" id="PIRSF000350">
    <property type="entry name" value="Mercury_reductase_MerA"/>
    <property type="match status" value="1"/>
</dbReference>
<dbReference type="PRINTS" id="PR00368">
    <property type="entry name" value="FADPNR"/>
</dbReference>
<dbReference type="PRINTS" id="PR00411">
    <property type="entry name" value="PNDRDTASEI"/>
</dbReference>
<dbReference type="SUPFAM" id="SSF51905">
    <property type="entry name" value="FAD/NAD(P)-binding domain"/>
    <property type="match status" value="1"/>
</dbReference>
<dbReference type="SUPFAM" id="SSF55424">
    <property type="entry name" value="FAD/NAD-linked reductases, dimerisation (C-terminal) domain"/>
    <property type="match status" value="1"/>
</dbReference>
<dbReference type="PROSITE" id="PS00076">
    <property type="entry name" value="PYRIDINE_REDOX_1"/>
    <property type="match status" value="1"/>
</dbReference>
<name>DLDH_ECO57</name>